<feature type="chain" id="PRO_0000298614" description="Uncharacterized hydrolase MW2501">
    <location>
        <begin position="1"/>
        <end position="276"/>
    </location>
</feature>
<feature type="domain" description="AB hydrolase-1" evidence="1">
    <location>
        <begin position="20"/>
        <end position="137"/>
    </location>
</feature>
<feature type="region of interest" description="Disordered" evidence="2">
    <location>
        <begin position="57"/>
        <end position="76"/>
    </location>
</feature>
<reference key="1">
    <citation type="journal article" date="2002" name="Lancet">
        <title>Genome and virulence determinants of high virulence community-acquired MRSA.</title>
        <authorList>
            <person name="Baba T."/>
            <person name="Takeuchi F."/>
            <person name="Kuroda M."/>
            <person name="Yuzawa H."/>
            <person name="Aoki K."/>
            <person name="Oguchi A."/>
            <person name="Nagai Y."/>
            <person name="Iwama N."/>
            <person name="Asano K."/>
            <person name="Naimi T."/>
            <person name="Kuroda H."/>
            <person name="Cui L."/>
            <person name="Yamamoto K."/>
            <person name="Hiramatsu K."/>
        </authorList>
    </citation>
    <scope>NUCLEOTIDE SEQUENCE [LARGE SCALE GENOMIC DNA]</scope>
    <source>
        <strain>MW2</strain>
    </source>
</reference>
<dbReference type="EC" id="3.-.-.-"/>
<dbReference type="EMBL" id="BA000033">
    <property type="protein sequence ID" value="BAB96366.1"/>
    <property type="molecule type" value="Genomic_DNA"/>
</dbReference>
<dbReference type="RefSeq" id="WP_000448906.1">
    <property type="nucleotide sequence ID" value="NC_003923.1"/>
</dbReference>
<dbReference type="SMR" id="Q8NUP5"/>
<dbReference type="ESTHER" id="staau-SA2367">
    <property type="family name" value="6_AlphaBeta_hydrolase"/>
</dbReference>
<dbReference type="KEGG" id="sam:MW2501"/>
<dbReference type="HOGENOM" id="CLU_083329_0_0_9"/>
<dbReference type="GO" id="GO:0016020">
    <property type="term" value="C:membrane"/>
    <property type="evidence" value="ECO:0007669"/>
    <property type="project" value="TreeGrafter"/>
</dbReference>
<dbReference type="GO" id="GO:0016787">
    <property type="term" value="F:hydrolase activity"/>
    <property type="evidence" value="ECO:0007669"/>
    <property type="project" value="UniProtKB-KW"/>
</dbReference>
<dbReference type="Gene3D" id="3.40.50.1820">
    <property type="entry name" value="alpha/beta hydrolase"/>
    <property type="match status" value="1"/>
</dbReference>
<dbReference type="InterPro" id="IPR000073">
    <property type="entry name" value="AB_hydrolase_1"/>
</dbReference>
<dbReference type="InterPro" id="IPR029058">
    <property type="entry name" value="AB_hydrolase_fold"/>
</dbReference>
<dbReference type="InterPro" id="IPR050266">
    <property type="entry name" value="AB_hydrolase_sf"/>
</dbReference>
<dbReference type="PANTHER" id="PTHR43798:SF31">
    <property type="entry name" value="AB HYDROLASE SUPERFAMILY PROTEIN YCLE"/>
    <property type="match status" value="1"/>
</dbReference>
<dbReference type="PANTHER" id="PTHR43798">
    <property type="entry name" value="MONOACYLGLYCEROL LIPASE"/>
    <property type="match status" value="1"/>
</dbReference>
<dbReference type="Pfam" id="PF00561">
    <property type="entry name" value="Abhydrolase_1"/>
    <property type="match status" value="1"/>
</dbReference>
<dbReference type="SUPFAM" id="SSF53474">
    <property type="entry name" value="alpha/beta-Hydrolases"/>
    <property type="match status" value="1"/>
</dbReference>
<name>Y2501_STAAW</name>
<keyword id="KW-0378">Hydrolase</keyword>
<comment type="similarity">
    <text evidence="3">Belongs to the AB hydrolase superfamily.</text>
</comment>
<organism>
    <name type="scientific">Staphylococcus aureus (strain MW2)</name>
    <dbReference type="NCBI Taxonomy" id="196620"/>
    <lineage>
        <taxon>Bacteria</taxon>
        <taxon>Bacillati</taxon>
        <taxon>Bacillota</taxon>
        <taxon>Bacilli</taxon>
        <taxon>Bacillales</taxon>
        <taxon>Staphylococcaceae</taxon>
        <taxon>Staphylococcus</taxon>
    </lineage>
</organism>
<protein>
    <recommendedName>
        <fullName>Uncharacterized hydrolase MW2501</fullName>
        <ecNumber>3.-.-.-</ecNumber>
    </recommendedName>
</protein>
<sequence>METLELQGAKLRYHQVGQGPVLIFIPGANGTGDIFLPLAEQLKDHFTVVAVDRRDYGESELTEPLPDSASNPDSDYRVKRDAQDIAELAKSLSDEPVYILGSSSGSIVAMHVLKDYPEVVKKIAFHEPPINTFLPDSTYWKDKNDDIVHQILTEGLEKGMKTFGETLNIAPIDAKMMSQPADTEEGRIEQYKRTMFWSEFEIRQYTHSDITLDDFTKYSDKITLLNGTDSRGSFPQDVNFYINKETSIPIVDIPGGHLGYIQKPEGFADVLLNMWG</sequence>
<evidence type="ECO:0000255" key="1"/>
<evidence type="ECO:0000256" key="2">
    <source>
        <dbReference type="SAM" id="MobiDB-lite"/>
    </source>
</evidence>
<evidence type="ECO:0000305" key="3"/>
<accession>Q8NUP5</accession>
<proteinExistence type="inferred from homology"/>
<gene>
    <name type="ordered locus">MW2501</name>
</gene>